<gene>
    <name evidence="1" type="primary">rbfA</name>
    <name type="ordered locus">RBAM_016490</name>
</gene>
<organism>
    <name type="scientific">Bacillus velezensis (strain DSM 23117 / BGSC 10A6 / LMG 26770 / FZB42)</name>
    <name type="common">Bacillus amyloliquefaciens subsp. plantarum</name>
    <dbReference type="NCBI Taxonomy" id="326423"/>
    <lineage>
        <taxon>Bacteria</taxon>
        <taxon>Bacillati</taxon>
        <taxon>Bacillota</taxon>
        <taxon>Bacilli</taxon>
        <taxon>Bacillales</taxon>
        <taxon>Bacillaceae</taxon>
        <taxon>Bacillus</taxon>
        <taxon>Bacillus amyloliquefaciens group</taxon>
    </lineage>
</organism>
<evidence type="ECO:0000255" key="1">
    <source>
        <dbReference type="HAMAP-Rule" id="MF_00003"/>
    </source>
</evidence>
<comment type="function">
    <text evidence="1">One of several proteins that assist in the late maturation steps of the functional core of the 30S ribosomal subunit. Associates with free 30S ribosomal subunits (but not with 30S subunits that are part of 70S ribosomes or polysomes). Required for efficient processing of 16S rRNA. May interact with the 5'-terminal helix region of 16S rRNA.</text>
</comment>
<comment type="subunit">
    <text evidence="1">Monomer. Binds 30S ribosomal subunits, but not 50S ribosomal subunits or 70S ribosomes.</text>
</comment>
<comment type="subcellular location">
    <subcellularLocation>
        <location evidence="1">Cytoplasm</location>
    </subcellularLocation>
</comment>
<comment type="similarity">
    <text evidence="1">Belongs to the RbfA family.</text>
</comment>
<feature type="chain" id="PRO_0000329323" description="Ribosome-binding factor A">
    <location>
        <begin position="1"/>
        <end position="115"/>
    </location>
</feature>
<proteinExistence type="inferred from homology"/>
<sequence length="115" mass="13141">MRANRVGEQMKKELGDIISRKLKDPRIGFLTVTDVRVSGDLQIAKVYISVLGGEKKKEEALKGLEKAKGFIRSEIGSRIRLRKTPELEFEFDESIEYGNRIETLIHELHSDKPSE</sequence>
<keyword id="KW-0963">Cytoplasm</keyword>
<keyword id="KW-0690">Ribosome biogenesis</keyword>
<protein>
    <recommendedName>
        <fullName evidence="1">Ribosome-binding factor A</fullName>
    </recommendedName>
</protein>
<dbReference type="EMBL" id="CP000560">
    <property type="protein sequence ID" value="ABS74012.1"/>
    <property type="molecule type" value="Genomic_DNA"/>
</dbReference>
<dbReference type="SMR" id="A7Z4T6"/>
<dbReference type="KEGG" id="bay:RBAM_016490"/>
<dbReference type="HOGENOM" id="CLU_089475_6_3_9"/>
<dbReference type="Proteomes" id="UP000001120">
    <property type="component" value="Chromosome"/>
</dbReference>
<dbReference type="GO" id="GO:0005829">
    <property type="term" value="C:cytosol"/>
    <property type="evidence" value="ECO:0007669"/>
    <property type="project" value="TreeGrafter"/>
</dbReference>
<dbReference type="GO" id="GO:0043024">
    <property type="term" value="F:ribosomal small subunit binding"/>
    <property type="evidence" value="ECO:0007669"/>
    <property type="project" value="TreeGrafter"/>
</dbReference>
<dbReference type="GO" id="GO:0030490">
    <property type="term" value="P:maturation of SSU-rRNA"/>
    <property type="evidence" value="ECO:0007669"/>
    <property type="project" value="UniProtKB-UniRule"/>
</dbReference>
<dbReference type="FunFam" id="3.30.300.20:FF:000009">
    <property type="entry name" value="Ribosome-binding factor A"/>
    <property type="match status" value="1"/>
</dbReference>
<dbReference type="Gene3D" id="3.30.300.20">
    <property type="match status" value="1"/>
</dbReference>
<dbReference type="HAMAP" id="MF_00003">
    <property type="entry name" value="RbfA"/>
    <property type="match status" value="1"/>
</dbReference>
<dbReference type="InterPro" id="IPR015946">
    <property type="entry name" value="KH_dom-like_a/b"/>
</dbReference>
<dbReference type="InterPro" id="IPR000238">
    <property type="entry name" value="RbfA"/>
</dbReference>
<dbReference type="InterPro" id="IPR023799">
    <property type="entry name" value="RbfA_dom_sf"/>
</dbReference>
<dbReference type="InterPro" id="IPR020053">
    <property type="entry name" value="Ribosome-bd_factorA_CS"/>
</dbReference>
<dbReference type="NCBIfam" id="TIGR00082">
    <property type="entry name" value="rbfA"/>
    <property type="match status" value="1"/>
</dbReference>
<dbReference type="PANTHER" id="PTHR33515">
    <property type="entry name" value="RIBOSOME-BINDING FACTOR A, CHLOROPLASTIC-RELATED"/>
    <property type="match status" value="1"/>
</dbReference>
<dbReference type="PANTHER" id="PTHR33515:SF1">
    <property type="entry name" value="RIBOSOME-BINDING FACTOR A, CHLOROPLASTIC-RELATED"/>
    <property type="match status" value="1"/>
</dbReference>
<dbReference type="Pfam" id="PF02033">
    <property type="entry name" value="RBFA"/>
    <property type="match status" value="1"/>
</dbReference>
<dbReference type="SUPFAM" id="SSF89919">
    <property type="entry name" value="Ribosome-binding factor A, RbfA"/>
    <property type="match status" value="1"/>
</dbReference>
<dbReference type="PROSITE" id="PS01319">
    <property type="entry name" value="RBFA"/>
    <property type="match status" value="1"/>
</dbReference>
<name>RBFA_BACVZ</name>
<reference key="1">
    <citation type="journal article" date="2007" name="Nat. Biotechnol.">
        <title>Comparative analysis of the complete genome sequence of the plant growth-promoting bacterium Bacillus amyloliquefaciens FZB42.</title>
        <authorList>
            <person name="Chen X.H."/>
            <person name="Koumoutsi A."/>
            <person name="Scholz R."/>
            <person name="Eisenreich A."/>
            <person name="Schneider K."/>
            <person name="Heinemeyer I."/>
            <person name="Morgenstern B."/>
            <person name="Voss B."/>
            <person name="Hess W.R."/>
            <person name="Reva O."/>
            <person name="Junge H."/>
            <person name="Voigt B."/>
            <person name="Jungblut P.R."/>
            <person name="Vater J."/>
            <person name="Suessmuth R."/>
            <person name="Liesegang H."/>
            <person name="Strittmatter A."/>
            <person name="Gottschalk G."/>
            <person name="Borriss R."/>
        </authorList>
    </citation>
    <scope>NUCLEOTIDE SEQUENCE [LARGE SCALE GENOMIC DNA]</scope>
    <source>
        <strain>DSM 23117 / BGSC 10A6 / LMG 26770 / FZB42</strain>
    </source>
</reference>
<accession>A7Z4T6</accession>